<dbReference type="EMBL" id="CP000050">
    <property type="protein sequence ID" value="AAY51161.1"/>
    <property type="molecule type" value="Genomic_DNA"/>
</dbReference>
<dbReference type="RefSeq" id="WP_002809462.1">
    <property type="nucleotide sequence ID" value="NZ_CP155948.1"/>
</dbReference>
<dbReference type="SMR" id="Q4UP62"/>
<dbReference type="GeneID" id="97512303"/>
<dbReference type="KEGG" id="xcb:XC_4122"/>
<dbReference type="HOGENOM" id="CLU_190949_1_1_6"/>
<dbReference type="Proteomes" id="UP000000420">
    <property type="component" value="Chromosome"/>
</dbReference>
<dbReference type="GO" id="GO:0022625">
    <property type="term" value="C:cytosolic large ribosomal subunit"/>
    <property type="evidence" value="ECO:0007669"/>
    <property type="project" value="TreeGrafter"/>
</dbReference>
<dbReference type="GO" id="GO:0003735">
    <property type="term" value="F:structural constituent of ribosome"/>
    <property type="evidence" value="ECO:0007669"/>
    <property type="project" value="InterPro"/>
</dbReference>
<dbReference type="GO" id="GO:0006412">
    <property type="term" value="P:translation"/>
    <property type="evidence" value="ECO:0007669"/>
    <property type="project" value="UniProtKB-UniRule"/>
</dbReference>
<dbReference type="FunFam" id="2.20.28.120:FF:000001">
    <property type="entry name" value="50S ribosomal protein L33"/>
    <property type="match status" value="1"/>
</dbReference>
<dbReference type="Gene3D" id="2.20.28.120">
    <property type="entry name" value="Ribosomal protein L33"/>
    <property type="match status" value="1"/>
</dbReference>
<dbReference type="HAMAP" id="MF_00294">
    <property type="entry name" value="Ribosomal_bL33"/>
    <property type="match status" value="1"/>
</dbReference>
<dbReference type="InterPro" id="IPR001705">
    <property type="entry name" value="Ribosomal_bL33"/>
</dbReference>
<dbReference type="InterPro" id="IPR018264">
    <property type="entry name" value="Ribosomal_bL33_CS"/>
</dbReference>
<dbReference type="InterPro" id="IPR038584">
    <property type="entry name" value="Ribosomal_bL33_sf"/>
</dbReference>
<dbReference type="InterPro" id="IPR011332">
    <property type="entry name" value="Ribosomal_zn-bd"/>
</dbReference>
<dbReference type="NCBIfam" id="NF001860">
    <property type="entry name" value="PRK00595.1"/>
    <property type="match status" value="1"/>
</dbReference>
<dbReference type="NCBIfam" id="TIGR01023">
    <property type="entry name" value="rpmG_bact"/>
    <property type="match status" value="1"/>
</dbReference>
<dbReference type="PANTHER" id="PTHR15238">
    <property type="entry name" value="54S RIBOSOMAL PROTEIN L39, MITOCHONDRIAL"/>
    <property type="match status" value="1"/>
</dbReference>
<dbReference type="PANTHER" id="PTHR15238:SF1">
    <property type="entry name" value="LARGE RIBOSOMAL SUBUNIT PROTEIN BL33M"/>
    <property type="match status" value="1"/>
</dbReference>
<dbReference type="Pfam" id="PF00471">
    <property type="entry name" value="Ribosomal_L33"/>
    <property type="match status" value="1"/>
</dbReference>
<dbReference type="SUPFAM" id="SSF57829">
    <property type="entry name" value="Zn-binding ribosomal proteins"/>
    <property type="match status" value="1"/>
</dbReference>
<dbReference type="PROSITE" id="PS00582">
    <property type="entry name" value="RIBOSOMAL_L33"/>
    <property type="match status" value="1"/>
</dbReference>
<gene>
    <name evidence="1" type="primary">rpmG</name>
    <name type="ordered locus">XC_4122</name>
</gene>
<comment type="similarity">
    <text evidence="1">Belongs to the bacterial ribosomal protein bL33 family.</text>
</comment>
<protein>
    <recommendedName>
        <fullName evidence="1">Large ribosomal subunit protein bL33</fullName>
    </recommendedName>
    <alternativeName>
        <fullName evidence="2">50S ribosomal protein L33</fullName>
    </alternativeName>
</protein>
<accession>Q4UP62</accession>
<evidence type="ECO:0000255" key="1">
    <source>
        <dbReference type="HAMAP-Rule" id="MF_00294"/>
    </source>
</evidence>
<evidence type="ECO:0000305" key="2"/>
<organism>
    <name type="scientific">Xanthomonas campestris pv. campestris (strain 8004)</name>
    <dbReference type="NCBI Taxonomy" id="314565"/>
    <lineage>
        <taxon>Bacteria</taxon>
        <taxon>Pseudomonadati</taxon>
        <taxon>Pseudomonadota</taxon>
        <taxon>Gammaproteobacteria</taxon>
        <taxon>Lysobacterales</taxon>
        <taxon>Lysobacteraceae</taxon>
        <taxon>Xanthomonas</taxon>
    </lineage>
</organism>
<reference key="1">
    <citation type="journal article" date="2005" name="Genome Res.">
        <title>Comparative and functional genomic analyses of the pathogenicity of phytopathogen Xanthomonas campestris pv. campestris.</title>
        <authorList>
            <person name="Qian W."/>
            <person name="Jia Y."/>
            <person name="Ren S.-X."/>
            <person name="He Y.-Q."/>
            <person name="Feng J.-X."/>
            <person name="Lu L.-F."/>
            <person name="Sun Q."/>
            <person name="Ying G."/>
            <person name="Tang D.-J."/>
            <person name="Tang H."/>
            <person name="Wu W."/>
            <person name="Hao P."/>
            <person name="Wang L."/>
            <person name="Jiang B.-L."/>
            <person name="Zeng S."/>
            <person name="Gu W.-Y."/>
            <person name="Lu G."/>
            <person name="Rong L."/>
            <person name="Tian Y."/>
            <person name="Yao Z."/>
            <person name="Fu G."/>
            <person name="Chen B."/>
            <person name="Fang R."/>
            <person name="Qiang B."/>
            <person name="Chen Z."/>
            <person name="Zhao G.-P."/>
            <person name="Tang J.-L."/>
            <person name="He C."/>
        </authorList>
    </citation>
    <scope>NUCLEOTIDE SEQUENCE [LARGE SCALE GENOMIC DNA]</scope>
    <source>
        <strain>8004</strain>
    </source>
</reference>
<sequence>MAKGKRDKIRMISSAATGHFYTTDKNKKNTPGKMEMMKYDPVVRKHVMYKEGKIK</sequence>
<name>RL33_XANC8</name>
<feature type="chain" id="PRO_1000004215" description="Large ribosomal subunit protein bL33">
    <location>
        <begin position="1"/>
        <end position="55"/>
    </location>
</feature>
<keyword id="KW-0687">Ribonucleoprotein</keyword>
<keyword id="KW-0689">Ribosomal protein</keyword>
<proteinExistence type="inferred from homology"/>